<keyword id="KW-1185">Reference proteome</keyword>
<keyword id="KW-0687">Ribonucleoprotein</keyword>
<keyword id="KW-0689">Ribosomal protein</keyword>
<feature type="chain" id="PRO_1000014984" description="Small ribosomal subunit protein uS10">
    <location>
        <begin position="1"/>
        <end position="102"/>
    </location>
</feature>
<dbReference type="EMBL" id="CP000454">
    <property type="protein sequence ID" value="ABK04355.1"/>
    <property type="molecule type" value="Genomic_DNA"/>
</dbReference>
<dbReference type="RefSeq" id="WP_003803825.1">
    <property type="nucleotide sequence ID" value="NC_008541.1"/>
</dbReference>
<dbReference type="SMR" id="A0JZ85"/>
<dbReference type="STRING" id="290399.Arth_2976"/>
<dbReference type="GeneID" id="97421003"/>
<dbReference type="KEGG" id="art:Arth_2976"/>
<dbReference type="eggNOG" id="COG0051">
    <property type="taxonomic scope" value="Bacteria"/>
</dbReference>
<dbReference type="HOGENOM" id="CLU_122625_1_3_11"/>
<dbReference type="OrthoDB" id="9804464at2"/>
<dbReference type="Proteomes" id="UP000000754">
    <property type="component" value="Chromosome"/>
</dbReference>
<dbReference type="GO" id="GO:1990904">
    <property type="term" value="C:ribonucleoprotein complex"/>
    <property type="evidence" value="ECO:0007669"/>
    <property type="project" value="UniProtKB-KW"/>
</dbReference>
<dbReference type="GO" id="GO:0005840">
    <property type="term" value="C:ribosome"/>
    <property type="evidence" value="ECO:0007669"/>
    <property type="project" value="UniProtKB-KW"/>
</dbReference>
<dbReference type="GO" id="GO:0003735">
    <property type="term" value="F:structural constituent of ribosome"/>
    <property type="evidence" value="ECO:0007669"/>
    <property type="project" value="InterPro"/>
</dbReference>
<dbReference type="GO" id="GO:0000049">
    <property type="term" value="F:tRNA binding"/>
    <property type="evidence" value="ECO:0007669"/>
    <property type="project" value="UniProtKB-UniRule"/>
</dbReference>
<dbReference type="GO" id="GO:0006412">
    <property type="term" value="P:translation"/>
    <property type="evidence" value="ECO:0007669"/>
    <property type="project" value="UniProtKB-UniRule"/>
</dbReference>
<dbReference type="FunFam" id="3.30.70.600:FF:000001">
    <property type="entry name" value="30S ribosomal protein S10"/>
    <property type="match status" value="1"/>
</dbReference>
<dbReference type="Gene3D" id="3.30.70.600">
    <property type="entry name" value="Ribosomal protein S10 domain"/>
    <property type="match status" value="1"/>
</dbReference>
<dbReference type="HAMAP" id="MF_00508">
    <property type="entry name" value="Ribosomal_uS10"/>
    <property type="match status" value="1"/>
</dbReference>
<dbReference type="InterPro" id="IPR001848">
    <property type="entry name" value="Ribosomal_uS10"/>
</dbReference>
<dbReference type="InterPro" id="IPR018268">
    <property type="entry name" value="Ribosomal_uS10_CS"/>
</dbReference>
<dbReference type="InterPro" id="IPR027486">
    <property type="entry name" value="Ribosomal_uS10_dom"/>
</dbReference>
<dbReference type="InterPro" id="IPR036838">
    <property type="entry name" value="Ribosomal_uS10_dom_sf"/>
</dbReference>
<dbReference type="NCBIfam" id="NF001861">
    <property type="entry name" value="PRK00596.1"/>
    <property type="match status" value="1"/>
</dbReference>
<dbReference type="NCBIfam" id="TIGR01049">
    <property type="entry name" value="rpsJ_bact"/>
    <property type="match status" value="1"/>
</dbReference>
<dbReference type="PANTHER" id="PTHR11700">
    <property type="entry name" value="30S RIBOSOMAL PROTEIN S10 FAMILY MEMBER"/>
    <property type="match status" value="1"/>
</dbReference>
<dbReference type="Pfam" id="PF00338">
    <property type="entry name" value="Ribosomal_S10"/>
    <property type="match status" value="1"/>
</dbReference>
<dbReference type="PRINTS" id="PR00971">
    <property type="entry name" value="RIBOSOMALS10"/>
</dbReference>
<dbReference type="SMART" id="SM01403">
    <property type="entry name" value="Ribosomal_S10"/>
    <property type="match status" value="1"/>
</dbReference>
<dbReference type="SUPFAM" id="SSF54999">
    <property type="entry name" value="Ribosomal protein S10"/>
    <property type="match status" value="1"/>
</dbReference>
<dbReference type="PROSITE" id="PS00361">
    <property type="entry name" value="RIBOSOMAL_S10"/>
    <property type="match status" value="1"/>
</dbReference>
<gene>
    <name evidence="1" type="primary">rpsJ</name>
    <name type="ordered locus">Arth_2976</name>
</gene>
<organism>
    <name type="scientific">Arthrobacter sp. (strain FB24)</name>
    <dbReference type="NCBI Taxonomy" id="290399"/>
    <lineage>
        <taxon>Bacteria</taxon>
        <taxon>Bacillati</taxon>
        <taxon>Actinomycetota</taxon>
        <taxon>Actinomycetes</taxon>
        <taxon>Micrococcales</taxon>
        <taxon>Micrococcaceae</taxon>
        <taxon>Arthrobacter</taxon>
    </lineage>
</organism>
<accession>A0JZ85</accession>
<protein>
    <recommendedName>
        <fullName evidence="1">Small ribosomal subunit protein uS10</fullName>
    </recommendedName>
    <alternativeName>
        <fullName evidence="2">30S ribosomal protein S10</fullName>
    </alternativeName>
</protein>
<reference key="1">
    <citation type="journal article" date="2013" name="Stand. Genomic Sci.">
        <title>Complete genome sequence of Arthrobacter sp. strain FB24.</title>
        <authorList>
            <person name="Nakatsu C.H."/>
            <person name="Barabote R."/>
            <person name="Thompson S."/>
            <person name="Bruce D."/>
            <person name="Detter C."/>
            <person name="Brettin T."/>
            <person name="Han C."/>
            <person name="Beasley F."/>
            <person name="Chen W."/>
            <person name="Konopka A."/>
            <person name="Xie G."/>
        </authorList>
    </citation>
    <scope>NUCLEOTIDE SEQUENCE [LARGE SCALE GENOMIC DNA]</scope>
    <source>
        <strain>FB24</strain>
    </source>
</reference>
<sequence length="102" mass="11645">MAGQKIRIRLKSYDHEVIDVSARKIVETVTRAGATVVGPVPLPTEKNVYCVIRSPHKYKDSREHFEMRTHKRLIDIIDPTPKAVDSLMRLDLPADVNIEIKL</sequence>
<name>RS10_ARTS2</name>
<evidence type="ECO:0000255" key="1">
    <source>
        <dbReference type="HAMAP-Rule" id="MF_00508"/>
    </source>
</evidence>
<evidence type="ECO:0000305" key="2"/>
<proteinExistence type="inferred from homology"/>
<comment type="function">
    <text evidence="1">Involved in the binding of tRNA to the ribosomes.</text>
</comment>
<comment type="subunit">
    <text evidence="1">Part of the 30S ribosomal subunit.</text>
</comment>
<comment type="similarity">
    <text evidence="1">Belongs to the universal ribosomal protein uS10 family.</text>
</comment>